<organism>
    <name type="scientific">Mycobacterium tuberculosis (strain CDC 1551 / Oshkosh)</name>
    <dbReference type="NCBI Taxonomy" id="83331"/>
    <lineage>
        <taxon>Bacteria</taxon>
        <taxon>Bacillati</taxon>
        <taxon>Actinomycetota</taxon>
        <taxon>Actinomycetes</taxon>
        <taxon>Mycobacteriales</taxon>
        <taxon>Mycobacteriaceae</taxon>
        <taxon>Mycobacterium</taxon>
        <taxon>Mycobacterium tuberculosis complex</taxon>
    </lineage>
</organism>
<feature type="chain" id="PRO_0000427177" description="Glucose-6-phosphate 1-dehydrogenase 2">
    <location>
        <begin position="1"/>
        <end position="514"/>
    </location>
</feature>
<feature type="active site" description="Proton acceptor" evidence="1">
    <location>
        <position position="268"/>
    </location>
</feature>
<feature type="binding site" evidence="1">
    <location>
        <position position="69"/>
    </location>
    <ligand>
        <name>NADP(+)</name>
        <dbReference type="ChEBI" id="CHEBI:58349"/>
    </ligand>
</feature>
<feature type="binding site" evidence="1">
    <location>
        <position position="176"/>
    </location>
    <ligand>
        <name>NADP(+)</name>
        <dbReference type="ChEBI" id="CHEBI:58349"/>
    </ligand>
</feature>
<feature type="binding site" evidence="1">
    <location>
        <position position="206"/>
    </location>
    <ligand>
        <name>substrate</name>
    </ligand>
</feature>
<feature type="binding site" evidence="1">
    <location>
        <position position="210"/>
    </location>
    <ligand>
        <name>substrate</name>
    </ligand>
</feature>
<feature type="binding site" evidence="1">
    <location>
        <position position="244"/>
    </location>
    <ligand>
        <name>substrate</name>
    </ligand>
</feature>
<feature type="binding site" evidence="1">
    <location>
        <position position="263"/>
    </location>
    <ligand>
        <name>substrate</name>
    </ligand>
</feature>
<feature type="binding site" evidence="1">
    <location>
        <position position="366"/>
    </location>
    <ligand>
        <name>substrate</name>
    </ligand>
</feature>
<proteinExistence type="inferred from homology"/>
<evidence type="ECO:0000255" key="1">
    <source>
        <dbReference type="HAMAP-Rule" id="MF_00966"/>
    </source>
</evidence>
<comment type="function">
    <text evidence="1">Catalyzes the oxidation of glucose 6-phosphate to 6-phosphogluconolactone.</text>
</comment>
<comment type="catalytic activity">
    <reaction evidence="1">
        <text>D-glucose 6-phosphate + NADP(+) = 6-phospho-D-glucono-1,5-lactone + NADPH + H(+)</text>
        <dbReference type="Rhea" id="RHEA:15841"/>
        <dbReference type="ChEBI" id="CHEBI:15378"/>
        <dbReference type="ChEBI" id="CHEBI:57783"/>
        <dbReference type="ChEBI" id="CHEBI:57955"/>
        <dbReference type="ChEBI" id="CHEBI:58349"/>
        <dbReference type="ChEBI" id="CHEBI:61548"/>
        <dbReference type="EC" id="1.1.1.49"/>
    </reaction>
</comment>
<comment type="pathway">
    <text evidence="1">Carbohydrate degradation; pentose phosphate pathway; D-ribulose 5-phosphate from D-glucose 6-phosphate (oxidative stage): step 1/3.</text>
</comment>
<comment type="similarity">
    <text evidence="1">Belongs to the glucose-6-phosphate dehydrogenase family.</text>
</comment>
<accession>P9WN72</accession>
<accession>L0T6P1</accession>
<accession>O08407</accession>
<accession>P0A584</accession>
<name>G6PD2_MYCTO</name>
<gene>
    <name evidence="1" type="primary">zwf2</name>
    <name type="synonym">zwf</name>
    <name type="ordered locus">MT1494</name>
</gene>
<protein>
    <recommendedName>
        <fullName evidence="1">Glucose-6-phosphate 1-dehydrogenase 2</fullName>
        <shortName evidence="1">G6PD 2</shortName>
        <ecNumber evidence="1">1.1.1.49</ecNumber>
    </recommendedName>
</protein>
<dbReference type="EC" id="1.1.1.49" evidence="1"/>
<dbReference type="EMBL" id="AE000516">
    <property type="protein sequence ID" value="AAK45757.1"/>
    <property type="molecule type" value="Genomic_DNA"/>
</dbReference>
<dbReference type="PIR" id="B70917">
    <property type="entry name" value="B70917"/>
</dbReference>
<dbReference type="RefSeq" id="WP_003407443.1">
    <property type="nucleotide sequence ID" value="NZ_KK341227.1"/>
</dbReference>
<dbReference type="SMR" id="P9WN72"/>
<dbReference type="KEGG" id="mtc:MT1494"/>
<dbReference type="PATRIC" id="fig|83331.31.peg.1606"/>
<dbReference type="HOGENOM" id="CLU_013524_5_0_11"/>
<dbReference type="UniPathway" id="UPA00115">
    <property type="reaction ID" value="UER00408"/>
</dbReference>
<dbReference type="Proteomes" id="UP000001020">
    <property type="component" value="Chromosome"/>
</dbReference>
<dbReference type="GO" id="GO:0005829">
    <property type="term" value="C:cytosol"/>
    <property type="evidence" value="ECO:0007669"/>
    <property type="project" value="TreeGrafter"/>
</dbReference>
<dbReference type="GO" id="GO:0004345">
    <property type="term" value="F:glucose-6-phosphate dehydrogenase activity"/>
    <property type="evidence" value="ECO:0007669"/>
    <property type="project" value="UniProtKB-UniRule"/>
</dbReference>
<dbReference type="GO" id="GO:0050661">
    <property type="term" value="F:NADP binding"/>
    <property type="evidence" value="ECO:0007669"/>
    <property type="project" value="UniProtKB-UniRule"/>
</dbReference>
<dbReference type="GO" id="GO:0006006">
    <property type="term" value="P:glucose metabolic process"/>
    <property type="evidence" value="ECO:0007669"/>
    <property type="project" value="UniProtKB-KW"/>
</dbReference>
<dbReference type="GO" id="GO:0009051">
    <property type="term" value="P:pentose-phosphate shunt, oxidative branch"/>
    <property type="evidence" value="ECO:0007669"/>
    <property type="project" value="TreeGrafter"/>
</dbReference>
<dbReference type="FunFam" id="3.30.360.10:FF:000011">
    <property type="entry name" value="Glucose-6-phosphate 1-dehydrogenase"/>
    <property type="match status" value="1"/>
</dbReference>
<dbReference type="Gene3D" id="3.30.360.10">
    <property type="entry name" value="Dihydrodipicolinate Reductase, domain 2"/>
    <property type="match status" value="1"/>
</dbReference>
<dbReference type="Gene3D" id="3.40.50.720">
    <property type="entry name" value="NAD(P)-binding Rossmann-like Domain"/>
    <property type="match status" value="1"/>
</dbReference>
<dbReference type="HAMAP" id="MF_00966">
    <property type="entry name" value="G6PD"/>
    <property type="match status" value="1"/>
</dbReference>
<dbReference type="InterPro" id="IPR001282">
    <property type="entry name" value="G6P_DH"/>
</dbReference>
<dbReference type="InterPro" id="IPR019796">
    <property type="entry name" value="G6P_DH_AS"/>
</dbReference>
<dbReference type="InterPro" id="IPR022675">
    <property type="entry name" value="G6P_DH_C"/>
</dbReference>
<dbReference type="InterPro" id="IPR022674">
    <property type="entry name" value="G6P_DH_NAD-bd"/>
</dbReference>
<dbReference type="InterPro" id="IPR036291">
    <property type="entry name" value="NAD(P)-bd_dom_sf"/>
</dbReference>
<dbReference type="NCBIfam" id="TIGR00871">
    <property type="entry name" value="zwf"/>
    <property type="match status" value="1"/>
</dbReference>
<dbReference type="PANTHER" id="PTHR23429:SF0">
    <property type="entry name" value="GLUCOSE-6-PHOSPHATE 1-DEHYDROGENASE"/>
    <property type="match status" value="1"/>
</dbReference>
<dbReference type="PANTHER" id="PTHR23429">
    <property type="entry name" value="GLUCOSE-6-PHOSPHATE 1-DEHYDROGENASE G6PD"/>
    <property type="match status" value="1"/>
</dbReference>
<dbReference type="Pfam" id="PF02781">
    <property type="entry name" value="G6PD_C"/>
    <property type="match status" value="1"/>
</dbReference>
<dbReference type="Pfam" id="PF00479">
    <property type="entry name" value="G6PD_N"/>
    <property type="match status" value="1"/>
</dbReference>
<dbReference type="PIRSF" id="PIRSF000110">
    <property type="entry name" value="G6PD"/>
    <property type="match status" value="1"/>
</dbReference>
<dbReference type="PRINTS" id="PR00079">
    <property type="entry name" value="G6PDHDRGNASE"/>
</dbReference>
<dbReference type="SUPFAM" id="SSF55347">
    <property type="entry name" value="Glyceraldehyde-3-phosphate dehydrogenase-like, C-terminal domain"/>
    <property type="match status" value="1"/>
</dbReference>
<dbReference type="SUPFAM" id="SSF51735">
    <property type="entry name" value="NAD(P)-binding Rossmann-fold domains"/>
    <property type="match status" value="1"/>
</dbReference>
<dbReference type="PROSITE" id="PS00069">
    <property type="entry name" value="G6P_DEHYDROGENASE"/>
    <property type="match status" value="1"/>
</dbReference>
<reference key="1">
    <citation type="journal article" date="2002" name="J. Bacteriol.">
        <title>Whole-genome comparison of Mycobacterium tuberculosis clinical and laboratory strains.</title>
        <authorList>
            <person name="Fleischmann R.D."/>
            <person name="Alland D."/>
            <person name="Eisen J.A."/>
            <person name="Carpenter L."/>
            <person name="White O."/>
            <person name="Peterson J.D."/>
            <person name="DeBoy R.T."/>
            <person name="Dodson R.J."/>
            <person name="Gwinn M.L."/>
            <person name="Haft D.H."/>
            <person name="Hickey E.K."/>
            <person name="Kolonay J.F."/>
            <person name="Nelson W.C."/>
            <person name="Umayam L.A."/>
            <person name="Ermolaeva M.D."/>
            <person name="Salzberg S.L."/>
            <person name="Delcher A."/>
            <person name="Utterback T.R."/>
            <person name="Weidman J.F."/>
            <person name="Khouri H.M."/>
            <person name="Gill J."/>
            <person name="Mikula A."/>
            <person name="Bishai W."/>
            <person name="Jacobs W.R. Jr."/>
            <person name="Venter J.C."/>
            <person name="Fraser C.M."/>
        </authorList>
    </citation>
    <scope>NUCLEOTIDE SEQUENCE [LARGE SCALE GENOMIC DNA]</scope>
    <source>
        <strain>CDC 1551 / Oshkosh</strain>
    </source>
</reference>
<sequence length="514" mass="57343">MKPAHAAASWRNPLRDKRDKRLPRIAGPCGMVIFGVTGDLARKKVMPAVYDLANRGLLPPTFSLVGFARRDWSTQDFGQVVYNAVQEHCRTPFRQQNWDRLAEGFRFVPGTFDDDDAFAQLAETLEKLDAERGTGGNHAFYLAIPPKSFPVVCEQLHKSGLARPQGDRWSRVVIEKPFGHDLASARELNKAVNAVFPEEAVFRIDHYLGKETVQNILALRFANQLFDPIWNAHYVDHVQITMAEDIGLGGRAGYYDGIGAARDVIQNHLMQLLALTAMEEPVSFHPAALQAEKIKVLSATRLAEPLDQTTSRGQYAAGWQGGEKVVGLLDEEGFAEDSTTETFAAITLEVDTRRWAGVPFYLRTGKRLGRRVTEIALVFRRAPHLPFDATMTDELGTNAMVIRVQPDEGVTLRFGSKVPGTAMEVRDVNMDFSYGSAFAEDSPEAYERLILDVLLGEPSLFPVNAEVELAWEILDPALEHWAAHGTPDAYEAGTWGPESSLEMLRRTGREWRRP</sequence>
<keyword id="KW-0119">Carbohydrate metabolism</keyword>
<keyword id="KW-0313">Glucose metabolism</keyword>
<keyword id="KW-0521">NADP</keyword>
<keyword id="KW-0560">Oxidoreductase</keyword>
<keyword id="KW-1185">Reference proteome</keyword>